<dbReference type="EMBL" id="CP000236">
    <property type="protein sequence ID" value="ABD44659.1"/>
    <property type="molecule type" value="Genomic_DNA"/>
</dbReference>
<dbReference type="RefSeq" id="WP_006011400.1">
    <property type="nucleotide sequence ID" value="NC_007799.1"/>
</dbReference>
<dbReference type="SMR" id="Q2GH19"/>
<dbReference type="STRING" id="205920.ECH_0446"/>
<dbReference type="KEGG" id="ech:ECH_0446"/>
<dbReference type="eggNOG" id="COG0333">
    <property type="taxonomic scope" value="Bacteria"/>
</dbReference>
<dbReference type="HOGENOM" id="CLU_129084_2_0_5"/>
<dbReference type="OrthoDB" id="9801927at2"/>
<dbReference type="Proteomes" id="UP000008320">
    <property type="component" value="Chromosome"/>
</dbReference>
<dbReference type="GO" id="GO:0015934">
    <property type="term" value="C:large ribosomal subunit"/>
    <property type="evidence" value="ECO:0007669"/>
    <property type="project" value="InterPro"/>
</dbReference>
<dbReference type="GO" id="GO:0003735">
    <property type="term" value="F:structural constituent of ribosome"/>
    <property type="evidence" value="ECO:0007669"/>
    <property type="project" value="InterPro"/>
</dbReference>
<dbReference type="GO" id="GO:0006412">
    <property type="term" value="P:translation"/>
    <property type="evidence" value="ECO:0007669"/>
    <property type="project" value="UniProtKB-UniRule"/>
</dbReference>
<dbReference type="Gene3D" id="1.20.5.640">
    <property type="entry name" value="Single helix bin"/>
    <property type="match status" value="1"/>
</dbReference>
<dbReference type="HAMAP" id="MF_00340">
    <property type="entry name" value="Ribosomal_bL32"/>
    <property type="match status" value="1"/>
</dbReference>
<dbReference type="InterPro" id="IPR002677">
    <property type="entry name" value="Ribosomal_bL32"/>
</dbReference>
<dbReference type="InterPro" id="IPR044957">
    <property type="entry name" value="Ribosomal_bL32_bact"/>
</dbReference>
<dbReference type="InterPro" id="IPR011332">
    <property type="entry name" value="Ribosomal_zn-bd"/>
</dbReference>
<dbReference type="NCBIfam" id="TIGR01031">
    <property type="entry name" value="rpmF_bact"/>
    <property type="match status" value="1"/>
</dbReference>
<dbReference type="PANTHER" id="PTHR35534">
    <property type="entry name" value="50S RIBOSOMAL PROTEIN L32"/>
    <property type="match status" value="1"/>
</dbReference>
<dbReference type="PANTHER" id="PTHR35534:SF1">
    <property type="entry name" value="LARGE RIBOSOMAL SUBUNIT PROTEIN BL32"/>
    <property type="match status" value="1"/>
</dbReference>
<dbReference type="Pfam" id="PF01783">
    <property type="entry name" value="Ribosomal_L32p"/>
    <property type="match status" value="1"/>
</dbReference>
<dbReference type="SUPFAM" id="SSF57829">
    <property type="entry name" value="Zn-binding ribosomal proteins"/>
    <property type="match status" value="1"/>
</dbReference>
<sequence length="61" mass="7025">MAVPKRKKSKSRRNMHRSHCRLKVPNIGIDKTTGEYKLSHHVCLGGYYNEKQVLEVDSSNV</sequence>
<feature type="chain" id="PRO_0000296460" description="Large ribosomal subunit protein bL32">
    <location>
        <begin position="1"/>
        <end position="61"/>
    </location>
</feature>
<accession>Q2GH19</accession>
<protein>
    <recommendedName>
        <fullName evidence="1">Large ribosomal subunit protein bL32</fullName>
    </recommendedName>
    <alternativeName>
        <fullName evidence="2">50S ribosomal protein L32</fullName>
    </alternativeName>
</protein>
<evidence type="ECO:0000255" key="1">
    <source>
        <dbReference type="HAMAP-Rule" id="MF_00340"/>
    </source>
</evidence>
<evidence type="ECO:0000305" key="2"/>
<reference key="1">
    <citation type="journal article" date="2006" name="PLoS Genet.">
        <title>Comparative genomics of emerging human ehrlichiosis agents.</title>
        <authorList>
            <person name="Dunning Hotopp J.C."/>
            <person name="Lin M."/>
            <person name="Madupu R."/>
            <person name="Crabtree J."/>
            <person name="Angiuoli S.V."/>
            <person name="Eisen J.A."/>
            <person name="Seshadri R."/>
            <person name="Ren Q."/>
            <person name="Wu M."/>
            <person name="Utterback T.R."/>
            <person name="Smith S."/>
            <person name="Lewis M."/>
            <person name="Khouri H."/>
            <person name="Zhang C."/>
            <person name="Niu H."/>
            <person name="Lin Q."/>
            <person name="Ohashi N."/>
            <person name="Zhi N."/>
            <person name="Nelson W.C."/>
            <person name="Brinkac L.M."/>
            <person name="Dodson R.J."/>
            <person name="Rosovitz M.J."/>
            <person name="Sundaram J.P."/>
            <person name="Daugherty S.C."/>
            <person name="Davidsen T."/>
            <person name="Durkin A.S."/>
            <person name="Gwinn M.L."/>
            <person name="Haft D.H."/>
            <person name="Selengut J.D."/>
            <person name="Sullivan S.A."/>
            <person name="Zafar N."/>
            <person name="Zhou L."/>
            <person name="Benahmed F."/>
            <person name="Forberger H."/>
            <person name="Halpin R."/>
            <person name="Mulligan S."/>
            <person name="Robinson J."/>
            <person name="White O."/>
            <person name="Rikihisa Y."/>
            <person name="Tettelin H."/>
        </authorList>
    </citation>
    <scope>NUCLEOTIDE SEQUENCE [LARGE SCALE GENOMIC DNA]</scope>
    <source>
        <strain>ATCC CRL-10679 / Arkansas</strain>
    </source>
</reference>
<comment type="similarity">
    <text evidence="1">Belongs to the bacterial ribosomal protein bL32 family.</text>
</comment>
<organism>
    <name type="scientific">Ehrlichia chaffeensis (strain ATCC CRL-10679 / Arkansas)</name>
    <dbReference type="NCBI Taxonomy" id="205920"/>
    <lineage>
        <taxon>Bacteria</taxon>
        <taxon>Pseudomonadati</taxon>
        <taxon>Pseudomonadota</taxon>
        <taxon>Alphaproteobacteria</taxon>
        <taxon>Rickettsiales</taxon>
        <taxon>Anaplasmataceae</taxon>
        <taxon>Ehrlichia</taxon>
    </lineage>
</organism>
<gene>
    <name evidence="1" type="primary">rpmF</name>
    <name type="ordered locus">ECH_0446</name>
</gene>
<name>RL32_EHRCR</name>
<proteinExistence type="inferred from homology"/>
<keyword id="KW-1185">Reference proteome</keyword>
<keyword id="KW-0687">Ribonucleoprotein</keyword>
<keyword id="KW-0689">Ribosomal protein</keyword>